<accession>P85042</accession>
<sequence>FGTYGHPRPRFYYNP</sequence>
<comment type="function">
    <text evidence="1">Does not inhibit chymotrypsin or trypsin.</text>
</comment>
<comment type="subcellular location">
    <subcellularLocation>
        <location evidence="1">Secreted</location>
    </subcellularLocation>
</comment>
<comment type="tissue specificity">
    <text evidence="1">Expressed by the venom gland.</text>
</comment>
<reference evidence="3" key="1">
    <citation type="submission" date="2006-11" db="UniProtKB">
        <title>Molecular analysis of the bioactive components in snake venoms.</title>
        <authorList>
            <person name="Guo C.T."/>
        </authorList>
    </citation>
    <scope>PROTEIN SEQUENCE</scope>
    <scope>FUNCTION</scope>
    <scope>SUBCELLULAR LOCATION</scope>
    <scope>TISSUE SPECIFICITY</scope>
    <source>
        <strain evidence="1">Burma</strain>
        <tissue evidence="1">Venom</tissue>
    </source>
</reference>
<name>IVBL_DABSI</name>
<evidence type="ECO:0000269" key="1">
    <source ref="1"/>
</evidence>
<evidence type="ECO:0000303" key="2">
    <source ref="1"/>
</evidence>
<evidence type="ECO:0000305" key="3"/>
<dbReference type="GO" id="GO:0005576">
    <property type="term" value="C:extracellular region"/>
    <property type="evidence" value="ECO:0007669"/>
    <property type="project" value="UniProtKB-SubCell"/>
</dbReference>
<keyword id="KW-0903">Direct protein sequencing</keyword>
<keyword id="KW-0964">Secreted</keyword>
<feature type="peptide" id="PRO_0000414618" description="BPTI-like protein" evidence="1">
    <location>
        <begin position="1"/>
        <end position="15" status="greater than"/>
    </location>
</feature>
<feature type="non-terminal residue" evidence="2">
    <location>
        <position position="15"/>
    </location>
</feature>
<organism>
    <name type="scientific">Daboia siamensis</name>
    <name type="common">Eastern Russel's viper</name>
    <name type="synonym">Daboia russelii siamensis</name>
    <dbReference type="NCBI Taxonomy" id="343250"/>
    <lineage>
        <taxon>Eukaryota</taxon>
        <taxon>Metazoa</taxon>
        <taxon>Chordata</taxon>
        <taxon>Craniata</taxon>
        <taxon>Vertebrata</taxon>
        <taxon>Euteleostomi</taxon>
        <taxon>Lepidosauria</taxon>
        <taxon>Squamata</taxon>
        <taxon>Bifurcata</taxon>
        <taxon>Unidentata</taxon>
        <taxon>Episquamata</taxon>
        <taxon>Toxicofera</taxon>
        <taxon>Serpentes</taxon>
        <taxon>Colubroidea</taxon>
        <taxon>Viperidae</taxon>
        <taxon>Viperinae</taxon>
        <taxon>Daboia</taxon>
    </lineage>
</organism>
<proteinExistence type="evidence at protein level"/>
<protein>
    <recommendedName>
        <fullName evidence="2">BPTI-like protein</fullName>
    </recommendedName>
</protein>